<organism>
    <name type="scientific">Salmonella dublin (strain CT_02021853)</name>
    <dbReference type="NCBI Taxonomy" id="439851"/>
    <lineage>
        <taxon>Bacteria</taxon>
        <taxon>Pseudomonadati</taxon>
        <taxon>Pseudomonadota</taxon>
        <taxon>Gammaproteobacteria</taxon>
        <taxon>Enterobacterales</taxon>
        <taxon>Enterobacteriaceae</taxon>
        <taxon>Salmonella</taxon>
    </lineage>
</organism>
<accession>B5FNF0</accession>
<dbReference type="EC" id="3.2.2.-" evidence="1"/>
<dbReference type="EC" id="4.2.99.18" evidence="1"/>
<dbReference type="EMBL" id="CP001144">
    <property type="protein sequence ID" value="ACH75911.1"/>
    <property type="molecule type" value="Genomic_DNA"/>
</dbReference>
<dbReference type="RefSeq" id="WP_001113972.1">
    <property type="nucleotide sequence ID" value="NC_011205.1"/>
</dbReference>
<dbReference type="SMR" id="B5FNF0"/>
<dbReference type="KEGG" id="sed:SeD_A0823"/>
<dbReference type="HOGENOM" id="CLU_038423_2_2_6"/>
<dbReference type="Proteomes" id="UP000008322">
    <property type="component" value="Chromosome"/>
</dbReference>
<dbReference type="GO" id="GO:0140078">
    <property type="term" value="F:class I DNA-(apurinic or apyrimidinic site) endonuclease activity"/>
    <property type="evidence" value="ECO:0007669"/>
    <property type="project" value="UniProtKB-EC"/>
</dbReference>
<dbReference type="GO" id="GO:0003684">
    <property type="term" value="F:damaged DNA binding"/>
    <property type="evidence" value="ECO:0007669"/>
    <property type="project" value="InterPro"/>
</dbReference>
<dbReference type="GO" id="GO:0000703">
    <property type="term" value="F:oxidized pyrimidine nucleobase lesion DNA N-glycosylase activity"/>
    <property type="evidence" value="ECO:0007669"/>
    <property type="project" value="UniProtKB-UniRule"/>
</dbReference>
<dbReference type="GO" id="GO:0008270">
    <property type="term" value="F:zinc ion binding"/>
    <property type="evidence" value="ECO:0007669"/>
    <property type="project" value="UniProtKB-UniRule"/>
</dbReference>
<dbReference type="GO" id="GO:0006284">
    <property type="term" value="P:base-excision repair"/>
    <property type="evidence" value="ECO:0007669"/>
    <property type="project" value="InterPro"/>
</dbReference>
<dbReference type="CDD" id="cd08965">
    <property type="entry name" value="EcNei-like_N"/>
    <property type="match status" value="1"/>
</dbReference>
<dbReference type="FunFam" id="1.10.8.50:FF:000005">
    <property type="entry name" value="Endonuclease 8"/>
    <property type="match status" value="1"/>
</dbReference>
<dbReference type="FunFam" id="3.20.190.10:FF:000002">
    <property type="entry name" value="Endonuclease 8"/>
    <property type="match status" value="1"/>
</dbReference>
<dbReference type="Gene3D" id="1.10.8.50">
    <property type="match status" value="1"/>
</dbReference>
<dbReference type="Gene3D" id="3.20.190.10">
    <property type="entry name" value="MutM-like, N-terminal"/>
    <property type="match status" value="1"/>
</dbReference>
<dbReference type="HAMAP" id="MF_01253">
    <property type="entry name" value="Endonuclease_8"/>
    <property type="match status" value="1"/>
</dbReference>
<dbReference type="InterPro" id="IPR015886">
    <property type="entry name" value="DNA_glyclase/AP_lyase_DNA-bd"/>
</dbReference>
<dbReference type="InterPro" id="IPR015887">
    <property type="entry name" value="DNA_glyclase_Znf_dom_DNA_BS"/>
</dbReference>
<dbReference type="InterPro" id="IPR044091">
    <property type="entry name" value="EcNei-like_N"/>
</dbReference>
<dbReference type="InterPro" id="IPR023713">
    <property type="entry name" value="Endonuclease-VIII"/>
</dbReference>
<dbReference type="InterPro" id="IPR012319">
    <property type="entry name" value="FPG_cat"/>
</dbReference>
<dbReference type="InterPro" id="IPR035937">
    <property type="entry name" value="MutM-like_N-ter"/>
</dbReference>
<dbReference type="InterPro" id="IPR010979">
    <property type="entry name" value="Ribosomal_uS13-like_H2TH"/>
</dbReference>
<dbReference type="InterPro" id="IPR000214">
    <property type="entry name" value="Znf_DNA_glyclase/AP_lyase"/>
</dbReference>
<dbReference type="InterPro" id="IPR010663">
    <property type="entry name" value="Znf_FPG/IleRS"/>
</dbReference>
<dbReference type="NCBIfam" id="NF007763">
    <property type="entry name" value="PRK10445.1"/>
    <property type="match status" value="1"/>
</dbReference>
<dbReference type="PANTHER" id="PTHR42697">
    <property type="entry name" value="ENDONUCLEASE 8"/>
    <property type="match status" value="1"/>
</dbReference>
<dbReference type="PANTHER" id="PTHR42697:SF1">
    <property type="entry name" value="ENDONUCLEASE 8"/>
    <property type="match status" value="1"/>
</dbReference>
<dbReference type="Pfam" id="PF01149">
    <property type="entry name" value="Fapy_DNA_glyco"/>
    <property type="match status" value="1"/>
</dbReference>
<dbReference type="Pfam" id="PF06831">
    <property type="entry name" value="H2TH"/>
    <property type="match status" value="1"/>
</dbReference>
<dbReference type="Pfam" id="PF06827">
    <property type="entry name" value="zf-FPG_IleRS"/>
    <property type="match status" value="1"/>
</dbReference>
<dbReference type="SMART" id="SM00898">
    <property type="entry name" value="Fapy_DNA_glyco"/>
    <property type="match status" value="1"/>
</dbReference>
<dbReference type="SMART" id="SM01232">
    <property type="entry name" value="H2TH"/>
    <property type="match status" value="1"/>
</dbReference>
<dbReference type="SUPFAM" id="SSF57716">
    <property type="entry name" value="Glucocorticoid receptor-like (DNA-binding domain)"/>
    <property type="match status" value="1"/>
</dbReference>
<dbReference type="SUPFAM" id="SSF81624">
    <property type="entry name" value="N-terminal domain of MutM-like DNA repair proteins"/>
    <property type="match status" value="1"/>
</dbReference>
<dbReference type="SUPFAM" id="SSF46946">
    <property type="entry name" value="S13-like H2TH domain"/>
    <property type="match status" value="1"/>
</dbReference>
<dbReference type="PROSITE" id="PS51068">
    <property type="entry name" value="FPG_CAT"/>
    <property type="match status" value="1"/>
</dbReference>
<dbReference type="PROSITE" id="PS01242">
    <property type="entry name" value="ZF_FPG_1"/>
    <property type="match status" value="1"/>
</dbReference>
<dbReference type="PROSITE" id="PS51066">
    <property type="entry name" value="ZF_FPG_2"/>
    <property type="match status" value="1"/>
</dbReference>
<proteinExistence type="inferred from homology"/>
<protein>
    <recommendedName>
        <fullName evidence="1">Endonuclease 8</fullName>
    </recommendedName>
    <alternativeName>
        <fullName evidence="1">DNA glycosylase/AP lyase Nei</fullName>
        <ecNumber evidence="1">3.2.2.-</ecNumber>
        <ecNumber evidence="1">4.2.99.18</ecNumber>
    </alternativeName>
    <alternativeName>
        <fullName evidence="1">DNA-(apurinic or apyrimidinic site) lyase Nei</fullName>
    </alternativeName>
    <alternativeName>
        <fullName evidence="1">Endonuclease VIII</fullName>
    </alternativeName>
</protein>
<name>END8_SALDC</name>
<gene>
    <name evidence="1" type="primary">nei</name>
    <name type="ordered locus">SeD_A0823</name>
</gene>
<sequence>MPEGPEIRRAADNLEAAIKGKPLTDVWFAFAQLKPYESQLTGQLVTRIETRGKALLTHFSNGLTLYSHNQLYGVWRVIDTGEIPQTTRILRVRLQTADKTILLYSASDIEMLTAEQLTTHPFLQRVGPDVLDARLTPEEVKVRLLSPRFRNRQFSGLLLDQAFLAGLGNYLRVEILWQVGLTGQHKAKDLNEAQLNALSHALLDIPRLSYTTRGQSDENKHHGALFRFKVFHRDGEACERCGGIIEKTTLSSRPFYWCPHCQK</sequence>
<comment type="function">
    <text evidence="1">Involved in base excision repair of DNA damaged by oxidation or by mutagenic agents. Acts as a DNA glycosylase that recognizes and removes damaged bases. Has a preference for oxidized pyrimidines, such as thymine glycol, 5,6-dihydrouracil and 5,6-dihydrothymine. Has AP (apurinic/apyrimidinic) lyase activity and introduces nicks in the DNA strand. Cleaves the DNA backbone by beta-delta elimination to generate a single-strand break at the site of the removed base with both 3'- and 5'-phosphates.</text>
</comment>
<comment type="catalytic activity">
    <reaction evidence="1">
        <text>2'-deoxyribonucleotide-(2'-deoxyribose 5'-phosphate)-2'-deoxyribonucleotide-DNA = a 3'-end 2'-deoxyribonucleotide-(2,3-dehydro-2,3-deoxyribose 5'-phosphate)-DNA + a 5'-end 5'-phospho-2'-deoxyribonucleoside-DNA + H(+)</text>
        <dbReference type="Rhea" id="RHEA:66592"/>
        <dbReference type="Rhea" id="RHEA-COMP:13180"/>
        <dbReference type="Rhea" id="RHEA-COMP:16897"/>
        <dbReference type="Rhea" id="RHEA-COMP:17067"/>
        <dbReference type="ChEBI" id="CHEBI:15378"/>
        <dbReference type="ChEBI" id="CHEBI:136412"/>
        <dbReference type="ChEBI" id="CHEBI:157695"/>
        <dbReference type="ChEBI" id="CHEBI:167181"/>
        <dbReference type="EC" id="4.2.99.18"/>
    </reaction>
</comment>
<comment type="cofactor">
    <cofactor evidence="1">
        <name>Zn(2+)</name>
        <dbReference type="ChEBI" id="CHEBI:29105"/>
    </cofactor>
    <text evidence="1">Binds 1 zinc ion per subunit.</text>
</comment>
<comment type="similarity">
    <text evidence="1">Belongs to the FPG family.</text>
</comment>
<reference key="1">
    <citation type="journal article" date="2011" name="J. Bacteriol.">
        <title>Comparative genomics of 28 Salmonella enterica isolates: evidence for CRISPR-mediated adaptive sublineage evolution.</title>
        <authorList>
            <person name="Fricke W.F."/>
            <person name="Mammel M.K."/>
            <person name="McDermott P.F."/>
            <person name="Tartera C."/>
            <person name="White D.G."/>
            <person name="Leclerc J.E."/>
            <person name="Ravel J."/>
            <person name="Cebula T.A."/>
        </authorList>
    </citation>
    <scope>NUCLEOTIDE SEQUENCE [LARGE SCALE GENOMIC DNA]</scope>
    <source>
        <strain>CT_02021853</strain>
    </source>
</reference>
<keyword id="KW-0227">DNA damage</keyword>
<keyword id="KW-0234">DNA repair</keyword>
<keyword id="KW-0238">DNA-binding</keyword>
<keyword id="KW-0326">Glycosidase</keyword>
<keyword id="KW-0378">Hydrolase</keyword>
<keyword id="KW-0456">Lyase</keyword>
<keyword id="KW-0479">Metal-binding</keyword>
<keyword id="KW-0511">Multifunctional enzyme</keyword>
<keyword id="KW-0862">Zinc</keyword>
<keyword id="KW-0863">Zinc-finger</keyword>
<evidence type="ECO:0000255" key="1">
    <source>
        <dbReference type="HAMAP-Rule" id="MF_01253"/>
    </source>
</evidence>
<feature type="initiator methionine" description="Removed" evidence="1">
    <location>
        <position position="1"/>
    </location>
</feature>
<feature type="chain" id="PRO_1000139940" description="Endonuclease 8">
    <location>
        <begin position="2"/>
        <end position="263"/>
    </location>
</feature>
<feature type="zinc finger region" description="FPG-type" evidence="1">
    <location>
        <begin position="229"/>
        <end position="263"/>
    </location>
</feature>
<feature type="active site" description="Schiff-base intermediate with DNA" evidence="1">
    <location>
        <position position="2"/>
    </location>
</feature>
<feature type="active site" description="Proton donor" evidence="1">
    <location>
        <position position="3"/>
    </location>
</feature>
<feature type="active site" description="Proton donor; for beta-elimination activity" evidence="1">
    <location>
        <position position="53"/>
    </location>
</feature>
<feature type="active site" description="Proton donor; for delta-elimination activity" evidence="1">
    <location>
        <position position="253"/>
    </location>
</feature>
<feature type="binding site" evidence="1">
    <location>
        <position position="70"/>
    </location>
    <ligand>
        <name>DNA</name>
        <dbReference type="ChEBI" id="CHEBI:16991"/>
    </ligand>
</feature>
<feature type="binding site" evidence="1">
    <location>
        <position position="125"/>
    </location>
    <ligand>
        <name>DNA</name>
        <dbReference type="ChEBI" id="CHEBI:16991"/>
    </ligand>
</feature>
<feature type="binding site" evidence="1">
    <location>
        <position position="169"/>
    </location>
    <ligand>
        <name>DNA</name>
        <dbReference type="ChEBI" id="CHEBI:16991"/>
    </ligand>
</feature>